<proteinExistence type="inferred from homology"/>
<keyword id="KW-0963">Cytoplasm</keyword>
<keyword id="KW-0378">Hydrolase</keyword>
<keyword id="KW-0540">Nuclease</keyword>
<keyword id="KW-0690">Ribosome biogenesis</keyword>
<evidence type="ECO:0000255" key="1">
    <source>
        <dbReference type="HAMAP-Rule" id="MF_00651"/>
    </source>
</evidence>
<feature type="chain" id="PRO_1000131077" description="Putative pre-16S rRNA nuclease">
    <location>
        <begin position="1"/>
        <end position="139"/>
    </location>
</feature>
<organism>
    <name type="scientific">Streptococcus pneumoniae (strain CGSP14)</name>
    <dbReference type="NCBI Taxonomy" id="516950"/>
    <lineage>
        <taxon>Bacteria</taxon>
        <taxon>Bacillati</taxon>
        <taxon>Bacillota</taxon>
        <taxon>Bacilli</taxon>
        <taxon>Lactobacillales</taxon>
        <taxon>Streptococcaceae</taxon>
        <taxon>Streptococcus</taxon>
    </lineage>
</organism>
<accession>B2IS28</accession>
<sequence>MRIMGLDVGSKTVGVAISDPLGFTAQGLEIIQINEEQGQFGFDRVKELVDTYKVERFVVGLPKNMNNTSGPRVEASQAYGAKLEEFFGLPVDYQDERLTTVAAERMLIEQADISRNKRKKVIDKLAAQLILQNYLDRKF</sequence>
<reference key="1">
    <citation type="journal article" date="2009" name="BMC Genomics">
        <title>Genome evolution driven by host adaptations results in a more virulent and antimicrobial-resistant Streptococcus pneumoniae serotype 14.</title>
        <authorList>
            <person name="Ding F."/>
            <person name="Tang P."/>
            <person name="Hsu M.-H."/>
            <person name="Cui P."/>
            <person name="Hu S."/>
            <person name="Yu J."/>
            <person name="Chiu C.-H."/>
        </authorList>
    </citation>
    <scope>NUCLEOTIDE SEQUENCE [LARGE SCALE GENOMIC DNA]</scope>
    <source>
        <strain>CGSP14</strain>
    </source>
</reference>
<protein>
    <recommendedName>
        <fullName evidence="1">Putative pre-16S rRNA nuclease</fullName>
        <ecNumber evidence="1">3.1.-.-</ecNumber>
    </recommendedName>
</protein>
<name>YQGF_STRPS</name>
<dbReference type="EC" id="3.1.-.-" evidence="1"/>
<dbReference type="EMBL" id="CP001033">
    <property type="protein sequence ID" value="ACB89458.1"/>
    <property type="molecule type" value="Genomic_DNA"/>
</dbReference>
<dbReference type="SMR" id="B2IS28"/>
<dbReference type="KEGG" id="spw:SPCG_0206"/>
<dbReference type="HOGENOM" id="CLU_098240_2_0_9"/>
<dbReference type="GO" id="GO:0005829">
    <property type="term" value="C:cytosol"/>
    <property type="evidence" value="ECO:0007669"/>
    <property type="project" value="TreeGrafter"/>
</dbReference>
<dbReference type="GO" id="GO:0004518">
    <property type="term" value="F:nuclease activity"/>
    <property type="evidence" value="ECO:0007669"/>
    <property type="project" value="UniProtKB-KW"/>
</dbReference>
<dbReference type="GO" id="GO:0000967">
    <property type="term" value="P:rRNA 5'-end processing"/>
    <property type="evidence" value="ECO:0007669"/>
    <property type="project" value="UniProtKB-UniRule"/>
</dbReference>
<dbReference type="CDD" id="cd16964">
    <property type="entry name" value="YqgF"/>
    <property type="match status" value="1"/>
</dbReference>
<dbReference type="FunFam" id="3.30.420.140:FF:000003">
    <property type="entry name" value="Putative pre-16S rRNA nuclease"/>
    <property type="match status" value="1"/>
</dbReference>
<dbReference type="Gene3D" id="3.30.420.140">
    <property type="entry name" value="YqgF/RNase H-like domain"/>
    <property type="match status" value="1"/>
</dbReference>
<dbReference type="HAMAP" id="MF_00651">
    <property type="entry name" value="Nuclease_YqgF"/>
    <property type="match status" value="1"/>
</dbReference>
<dbReference type="InterPro" id="IPR012337">
    <property type="entry name" value="RNaseH-like_sf"/>
</dbReference>
<dbReference type="InterPro" id="IPR005227">
    <property type="entry name" value="YqgF"/>
</dbReference>
<dbReference type="InterPro" id="IPR006641">
    <property type="entry name" value="YqgF/RNaseH-like_dom"/>
</dbReference>
<dbReference type="InterPro" id="IPR037027">
    <property type="entry name" value="YqgF/RNaseH-like_dom_sf"/>
</dbReference>
<dbReference type="NCBIfam" id="TIGR00250">
    <property type="entry name" value="RNAse_H_YqgF"/>
    <property type="match status" value="1"/>
</dbReference>
<dbReference type="PANTHER" id="PTHR33317">
    <property type="entry name" value="POLYNUCLEOTIDYL TRANSFERASE, RIBONUCLEASE H-LIKE SUPERFAMILY PROTEIN"/>
    <property type="match status" value="1"/>
</dbReference>
<dbReference type="PANTHER" id="PTHR33317:SF4">
    <property type="entry name" value="POLYNUCLEOTIDYL TRANSFERASE, RIBONUCLEASE H-LIKE SUPERFAMILY PROTEIN"/>
    <property type="match status" value="1"/>
</dbReference>
<dbReference type="Pfam" id="PF03652">
    <property type="entry name" value="RuvX"/>
    <property type="match status" value="1"/>
</dbReference>
<dbReference type="SMART" id="SM00732">
    <property type="entry name" value="YqgFc"/>
    <property type="match status" value="1"/>
</dbReference>
<dbReference type="SUPFAM" id="SSF53098">
    <property type="entry name" value="Ribonuclease H-like"/>
    <property type="match status" value="1"/>
</dbReference>
<comment type="function">
    <text evidence="1">Could be a nuclease involved in processing of the 5'-end of pre-16S rRNA.</text>
</comment>
<comment type="subcellular location">
    <subcellularLocation>
        <location evidence="1">Cytoplasm</location>
    </subcellularLocation>
</comment>
<comment type="similarity">
    <text evidence="1">Belongs to the YqgF nuclease family.</text>
</comment>
<gene>
    <name type="ordered locus">SPCG_0206</name>
</gene>